<feature type="chain" id="PRO_0000422197" description="Averufin oxidase A">
    <location>
        <begin position="1"/>
        <end position="282"/>
    </location>
</feature>
<comment type="function">
    <text evidence="1">Involved in the conversion of averufin (AVF) to versiconal hemiacetal acetate (VHA) in the aflatoxin biosynthesis pathway.</text>
</comment>
<comment type="pathway">
    <text evidence="1">Mycotoxin biosynthesis; aflatoxin biosynthesis.</text>
</comment>
<comment type="similarity">
    <text evidence="2">Belongs to the avfA family.</text>
</comment>
<comment type="sequence caution" evidence="2">
    <conflict type="erroneous gene model prediction">
        <sequence resource="EMBL-CDS" id="EED51158"/>
    </conflict>
</comment>
<proteinExistence type="inferred from homology"/>
<protein>
    <recommendedName>
        <fullName>Averufin oxidase A</fullName>
        <ecNumber>1.-.-.-</ecNumber>
    </recommendedName>
</protein>
<reference key="1">
    <citation type="journal article" date="2000" name="Gene">
        <title>Cloning and characterization of avfA and omtB genes involved in aflatoxin biosynthesis in three Aspergillus species.</title>
        <authorList>
            <person name="Yu J."/>
            <person name="Woloshuk C.P."/>
            <person name="Bhatnagar D."/>
            <person name="Cleveland T.E."/>
        </authorList>
    </citation>
    <scope>NUCLEOTIDE SEQUENCE [GENOMIC DNA]</scope>
    <scope>FUNCTION</scope>
    <scope>PATHWAY</scope>
    <source>
        <strain>ATCC 200026 / FGSC A1120 / IAM 13836 / NRRL 3357 / JCM 12722 / SRRC 167</strain>
    </source>
</reference>
<reference key="2">
    <citation type="journal article" date="2015" name="Genome Announc.">
        <title>Genome sequence of Aspergillus flavus NRRL 3357, a strain that causes aflatoxin contamination of food and feed.</title>
        <authorList>
            <person name="Nierman W.C."/>
            <person name="Yu J."/>
            <person name="Fedorova-Abrams N.D."/>
            <person name="Losada L."/>
            <person name="Cleveland T.E."/>
            <person name="Bhatnagar D."/>
            <person name="Bennett J.W."/>
            <person name="Dean R."/>
            <person name="Payne G.A."/>
        </authorList>
    </citation>
    <scope>NUCLEOTIDE SEQUENCE [LARGE SCALE GENOMIC DNA]</scope>
    <source>
        <strain>ATCC 200026 / FGSC A1120 / IAM 13836 / NRRL 3357 / JCM 12722 / SRRC 167</strain>
    </source>
</reference>
<keyword id="KW-0560">Oxidoreductase</keyword>
<organism>
    <name type="scientific">Aspergillus flavus (strain ATCC 200026 / FGSC A1120 / IAM 13836 / NRRL 3357 / JCM 12722 / SRRC 167)</name>
    <dbReference type="NCBI Taxonomy" id="332952"/>
    <lineage>
        <taxon>Eukaryota</taxon>
        <taxon>Fungi</taxon>
        <taxon>Dikarya</taxon>
        <taxon>Ascomycota</taxon>
        <taxon>Pezizomycotina</taxon>
        <taxon>Eurotiomycetes</taxon>
        <taxon>Eurotiomycetidae</taxon>
        <taxon>Eurotiales</taxon>
        <taxon>Aspergillaceae</taxon>
        <taxon>Aspergillus</taxon>
        <taxon>Aspergillus subgen. Circumdati</taxon>
    </lineage>
</organism>
<gene>
    <name type="primary">avfA</name>
    <name type="ORF">AFLA_139230</name>
</gene>
<evidence type="ECO:0000269" key="1">
    <source>
    </source>
</evidence>
<evidence type="ECO:0000305" key="2"/>
<name>AVFA_ASPFN</name>
<sequence length="282" mass="30550">MVTYALLGATGATGSSILRHLLHESPDSLRIQILVRSKVKLLQAFPNLQTTRNPQVHVIQGTSTDPDALSECLRNASIVFMCVAQNGSPIGTTLCQDSARAIISVLQQQQQSQGASYQPCTIVQLRSASLNPALAAQVPAFVHRIVSFCLFANYADIKKACQYYSQAQKQGILEYILVDPPTLHDANGTQPTGYRLISTESQATALSYADLGAAMCEIAHRQSEFHGRAVGVTATGRVRQAWGVLLRHLLEGGSARLREKIAQETVVDGVVFAFLVVLAYLM</sequence>
<accession>Q9P8Z9</accession>
<accession>B8NHY7</accession>
<dbReference type="EC" id="1.-.-.-"/>
<dbReference type="EMBL" id="AF159789">
    <property type="protein sequence ID" value="AAF26224.1"/>
    <property type="molecule type" value="Genomic_DNA"/>
</dbReference>
<dbReference type="EMBL" id="EQ963478">
    <property type="protein sequence ID" value="EED51158.1"/>
    <property type="status" value="ALT_SEQ"/>
    <property type="molecule type" value="Genomic_DNA"/>
</dbReference>
<dbReference type="RefSeq" id="XP_002379934.1">
    <property type="nucleotide sequence ID" value="XM_002379893.1"/>
</dbReference>
<dbReference type="STRING" id="332952.Q9P8Z9"/>
<dbReference type="EnsemblFungi" id="EED51158">
    <property type="protein sequence ID" value="EED51158"/>
    <property type="gene ID" value="AFLA_139230"/>
</dbReference>
<dbReference type="VEuPathDB" id="FungiDB:AFLA_006293"/>
<dbReference type="eggNOG" id="ENOG502SM0C">
    <property type="taxonomic scope" value="Eukaryota"/>
</dbReference>
<dbReference type="UniPathway" id="UPA00287"/>
<dbReference type="GO" id="GO:0016646">
    <property type="term" value="F:oxidoreductase activity, acting on the CH-NH group of donors, NAD or NADP as acceptor"/>
    <property type="evidence" value="ECO:0007669"/>
    <property type="project" value="TreeGrafter"/>
</dbReference>
<dbReference type="GO" id="GO:0045122">
    <property type="term" value="P:aflatoxin biosynthetic process"/>
    <property type="evidence" value="ECO:0007669"/>
    <property type="project" value="UniProtKB-UniPathway"/>
</dbReference>
<dbReference type="Gene3D" id="3.40.50.720">
    <property type="entry name" value="NAD(P)-binding Rossmann-like Domain"/>
    <property type="match status" value="1"/>
</dbReference>
<dbReference type="InterPro" id="IPR016040">
    <property type="entry name" value="NAD(P)-bd_dom"/>
</dbReference>
<dbReference type="InterPro" id="IPR036291">
    <property type="entry name" value="NAD(P)-bd_dom_sf"/>
</dbReference>
<dbReference type="InterPro" id="IPR051606">
    <property type="entry name" value="Polyketide_Oxido-like"/>
</dbReference>
<dbReference type="PANTHER" id="PTHR43355">
    <property type="entry name" value="FLAVIN REDUCTASE (NADPH)"/>
    <property type="match status" value="1"/>
</dbReference>
<dbReference type="PANTHER" id="PTHR43355:SF2">
    <property type="entry name" value="FLAVIN REDUCTASE (NADPH)"/>
    <property type="match status" value="1"/>
</dbReference>
<dbReference type="Pfam" id="PF13460">
    <property type="entry name" value="NAD_binding_10"/>
    <property type="match status" value="1"/>
</dbReference>
<dbReference type="SUPFAM" id="SSF51735">
    <property type="entry name" value="NAD(P)-binding Rossmann-fold domains"/>
    <property type="match status" value="1"/>
</dbReference>